<dbReference type="EMBL" id="AB050859">
    <property type="protein sequence ID" value="BAB69827.1"/>
    <property type="molecule type" value="Genomic_DNA"/>
</dbReference>
<dbReference type="EMBL" id="BA000018">
    <property type="protein sequence ID" value="BAB42970.1"/>
    <property type="molecule type" value="Genomic_DNA"/>
</dbReference>
<dbReference type="PIR" id="C89976">
    <property type="entry name" value="C89976"/>
</dbReference>
<dbReference type="RefSeq" id="WP_000153535.1">
    <property type="nucleotide sequence ID" value="NC_002745.2"/>
</dbReference>
<dbReference type="SMR" id="Q7A4R9"/>
<dbReference type="EnsemblBacteria" id="BAB42970">
    <property type="protein sequence ID" value="BAB42970"/>
    <property type="gene ID" value="BAB42970"/>
</dbReference>
<dbReference type="KEGG" id="sau:SA1700"/>
<dbReference type="HOGENOM" id="CLU_000445_90_10_9"/>
<dbReference type="PHI-base" id="PHI:8948"/>
<dbReference type="GO" id="GO:0005737">
    <property type="term" value="C:cytoplasm"/>
    <property type="evidence" value="ECO:0007669"/>
    <property type="project" value="UniProtKB-SubCell"/>
</dbReference>
<dbReference type="GO" id="GO:0003677">
    <property type="term" value="F:DNA binding"/>
    <property type="evidence" value="ECO:0007669"/>
    <property type="project" value="UniProtKB-KW"/>
</dbReference>
<dbReference type="GO" id="GO:0000160">
    <property type="term" value="P:phosphorelay signal transduction system"/>
    <property type="evidence" value="ECO:0007669"/>
    <property type="project" value="UniProtKB-KW"/>
</dbReference>
<dbReference type="GO" id="GO:0006355">
    <property type="term" value="P:regulation of DNA-templated transcription"/>
    <property type="evidence" value="ECO:0007669"/>
    <property type="project" value="InterPro"/>
</dbReference>
<dbReference type="GO" id="GO:0046677">
    <property type="term" value="P:response to antibiotic"/>
    <property type="evidence" value="ECO:0007669"/>
    <property type="project" value="UniProtKB-KW"/>
</dbReference>
<dbReference type="CDD" id="cd06170">
    <property type="entry name" value="LuxR_C_like"/>
    <property type="match status" value="1"/>
</dbReference>
<dbReference type="CDD" id="cd17535">
    <property type="entry name" value="REC_NarL-like"/>
    <property type="match status" value="1"/>
</dbReference>
<dbReference type="Gene3D" id="3.40.50.2300">
    <property type="match status" value="1"/>
</dbReference>
<dbReference type="InterPro" id="IPR011006">
    <property type="entry name" value="CheY-like_superfamily"/>
</dbReference>
<dbReference type="InterPro" id="IPR016032">
    <property type="entry name" value="Sig_transdc_resp-reg_C-effctor"/>
</dbReference>
<dbReference type="InterPro" id="IPR001789">
    <property type="entry name" value="Sig_transdc_resp-reg_receiver"/>
</dbReference>
<dbReference type="InterPro" id="IPR000792">
    <property type="entry name" value="Tscrpt_reg_LuxR_C"/>
</dbReference>
<dbReference type="InterPro" id="IPR039420">
    <property type="entry name" value="WalR-like"/>
</dbReference>
<dbReference type="PANTHER" id="PTHR43214:SF37">
    <property type="entry name" value="TRANSCRIPTIONAL REGULATORY PROTEIN YDFI"/>
    <property type="match status" value="1"/>
</dbReference>
<dbReference type="PANTHER" id="PTHR43214">
    <property type="entry name" value="TWO-COMPONENT RESPONSE REGULATOR"/>
    <property type="match status" value="1"/>
</dbReference>
<dbReference type="Pfam" id="PF00196">
    <property type="entry name" value="GerE"/>
    <property type="match status" value="1"/>
</dbReference>
<dbReference type="Pfam" id="PF00072">
    <property type="entry name" value="Response_reg"/>
    <property type="match status" value="1"/>
</dbReference>
<dbReference type="PRINTS" id="PR00038">
    <property type="entry name" value="HTHLUXR"/>
</dbReference>
<dbReference type="SMART" id="SM00421">
    <property type="entry name" value="HTH_LUXR"/>
    <property type="match status" value="1"/>
</dbReference>
<dbReference type="SMART" id="SM00448">
    <property type="entry name" value="REC"/>
    <property type="match status" value="1"/>
</dbReference>
<dbReference type="SUPFAM" id="SSF46894">
    <property type="entry name" value="C-terminal effector domain of the bipartite response regulators"/>
    <property type="match status" value="1"/>
</dbReference>
<dbReference type="SUPFAM" id="SSF52172">
    <property type="entry name" value="CheY-like"/>
    <property type="match status" value="1"/>
</dbReference>
<dbReference type="PROSITE" id="PS50043">
    <property type="entry name" value="HTH_LUXR_2"/>
    <property type="match status" value="1"/>
</dbReference>
<dbReference type="PROSITE" id="PS50110">
    <property type="entry name" value="RESPONSE_REGULATORY"/>
    <property type="match status" value="1"/>
</dbReference>
<accession>Q7A4R9</accession>
<accession>Q9KWK7</accession>
<feature type="chain" id="PRO_0000081271" description="Response regulator protein VraR">
    <location>
        <begin position="1"/>
        <end position="209"/>
    </location>
</feature>
<feature type="domain" description="Response regulatory" evidence="3">
    <location>
        <begin position="4"/>
        <end position="120"/>
    </location>
</feature>
<feature type="domain" description="HTH luxR-type" evidence="4">
    <location>
        <begin position="141"/>
        <end position="206"/>
    </location>
</feature>
<feature type="DNA-binding region" description="H-T-H motif" evidence="4">
    <location>
        <begin position="165"/>
        <end position="184"/>
    </location>
</feature>
<feature type="modified residue" description="4-aspartylphosphate" evidence="3">
    <location>
        <position position="55"/>
    </location>
</feature>
<evidence type="ECO:0000250" key="1">
    <source>
        <dbReference type="UniProtKB" id="P0C0Z1"/>
    </source>
</evidence>
<evidence type="ECO:0000250" key="2">
    <source>
        <dbReference type="UniProtKB" id="Q7A2Q1"/>
    </source>
</evidence>
<evidence type="ECO:0000255" key="3">
    <source>
        <dbReference type="PROSITE-ProRule" id="PRU00169"/>
    </source>
</evidence>
<evidence type="ECO:0000255" key="4">
    <source>
        <dbReference type="PROSITE-ProRule" id="PRU00411"/>
    </source>
</evidence>
<evidence type="ECO:0000269" key="5">
    <source>
    </source>
</evidence>
<evidence type="ECO:0000305" key="6"/>
<proteinExistence type="evidence at protein level"/>
<reference key="1">
    <citation type="submission" date="2000-11" db="EMBL/GenBank/DDBJ databases">
        <title>Identification of differentially expressed genes of Staphylococcus aureus in response to and in raised resistance to imipenem.</title>
        <authorList>
            <person name="Kuroda-Murakami H."/>
            <person name="Kuroda M."/>
            <person name="Hiramatsu K."/>
        </authorList>
    </citation>
    <scope>NUCLEOTIDE SEQUENCE [GENOMIC DNA]</scope>
</reference>
<reference key="2">
    <citation type="journal article" date="2001" name="Lancet">
        <title>Whole genome sequencing of meticillin-resistant Staphylococcus aureus.</title>
        <authorList>
            <person name="Kuroda M."/>
            <person name="Ohta T."/>
            <person name="Uchiyama I."/>
            <person name="Baba T."/>
            <person name="Yuzawa H."/>
            <person name="Kobayashi I."/>
            <person name="Cui L."/>
            <person name="Oguchi A."/>
            <person name="Aoki K."/>
            <person name="Nagai Y."/>
            <person name="Lian J.-Q."/>
            <person name="Ito T."/>
            <person name="Kanamori M."/>
            <person name="Matsumaru H."/>
            <person name="Maruyama A."/>
            <person name="Murakami H."/>
            <person name="Hosoyama A."/>
            <person name="Mizutani-Ui Y."/>
            <person name="Takahashi N.K."/>
            <person name="Sawano T."/>
            <person name="Inoue R."/>
            <person name="Kaito C."/>
            <person name="Sekimizu K."/>
            <person name="Hirakawa H."/>
            <person name="Kuhara S."/>
            <person name="Goto S."/>
            <person name="Yabuzaki J."/>
            <person name="Kanehisa M."/>
            <person name="Yamashita A."/>
            <person name="Oshima K."/>
            <person name="Furuya K."/>
            <person name="Yoshino C."/>
            <person name="Shiba T."/>
            <person name="Hattori M."/>
            <person name="Ogasawara N."/>
            <person name="Hayashi H."/>
            <person name="Hiramatsu K."/>
        </authorList>
    </citation>
    <scope>NUCLEOTIDE SEQUENCE [LARGE SCALE GENOMIC DNA]</scope>
    <source>
        <strain>N315</strain>
    </source>
</reference>
<reference key="3">
    <citation type="journal article" date="2003" name="Mol. Microbiol.">
        <title>Two-component system VraSR positively modulates the regulation of cell-wall biosynthesis pathway in Staphylococcus aureus.</title>
        <authorList>
            <person name="Kuroda M."/>
            <person name="Kuroda H."/>
            <person name="Oshima T."/>
            <person name="Takeuchi F."/>
            <person name="Mori H."/>
            <person name="Hiramatsu K."/>
        </authorList>
    </citation>
    <scope>FUNCTION</scope>
    <scope>REGULATION BY ANTIBIOTICS</scope>
</reference>
<reference key="4">
    <citation type="submission" date="2007-10" db="UniProtKB">
        <title>Shotgun proteomic analysis of total and membrane protein extracts of S. aureus strain N315.</title>
        <authorList>
            <person name="Vaezzadeh A.R."/>
            <person name="Deshusses J."/>
            <person name="Lescuyer P."/>
            <person name="Hochstrasser D.F."/>
        </authorList>
    </citation>
    <scope>IDENTIFICATION BY MASS SPECTROMETRY [LARGE SCALE ANALYSIS]</scope>
    <source>
        <strain>N315</strain>
    </source>
</reference>
<comment type="function">
    <text evidence="1 5">Member of the two-component regulatory system VraS/VraR involved in the control of the cell wall peptidoglycan biosynthesis. Upon cellular stress, the histidine kinase VraS transfers the phosphoryl group onto VraR. Upon phosphorylation, VraR dimerizes at the N-terminal domain. In turn, phosphorylation-induced dimerization expands and enhances the VraR binding to its own promoter leading to increased expression and subsequent modulation of as many as 40 genes, which ultimately constitute the S.aureus response to cell wall damage (PubMed:12864861). In addition, inhibits the host autophagic flux and delays the early stage of autophagosome formation, thereby promoting bacterial survival. Facilitates the ability of S.aureus to resist host polymorphonuclear leukocytes-mediated phagocytosis and killing thus contributing to immune evasion (By similarity).</text>
</comment>
<comment type="subunit">
    <text evidence="2">Homodimer.</text>
</comment>
<comment type="subcellular location">
    <subcellularLocation>
        <location evidence="6">Cytoplasm</location>
    </subcellularLocation>
</comment>
<comment type="induction">
    <text>Induced by antibiotics (teicoplanin, ceftizoxime, imipenem, bacitracin, D-cycloserine and vancomycin).</text>
</comment>
<comment type="PTM">
    <text evidence="2">Phosphorylated by VraS. Phosphorylation state of VraR controls dimerization of the protein.</text>
</comment>
<gene>
    <name type="primary">vraR</name>
    <name type="ordered locus">SA1700</name>
</gene>
<organism>
    <name type="scientific">Staphylococcus aureus (strain N315)</name>
    <dbReference type="NCBI Taxonomy" id="158879"/>
    <lineage>
        <taxon>Bacteria</taxon>
        <taxon>Bacillati</taxon>
        <taxon>Bacillota</taxon>
        <taxon>Bacilli</taxon>
        <taxon>Bacillales</taxon>
        <taxon>Staphylococcaceae</taxon>
        <taxon>Staphylococcus</taxon>
    </lineage>
</organism>
<protein>
    <recommendedName>
        <fullName>Response regulator protein VraR</fullName>
    </recommendedName>
</protein>
<name>VRAR_STAAN</name>
<keyword id="KW-0010">Activator</keyword>
<keyword id="KW-0046">Antibiotic resistance</keyword>
<keyword id="KW-0963">Cytoplasm</keyword>
<keyword id="KW-0238">DNA-binding</keyword>
<keyword id="KW-0597">Phosphoprotein</keyword>
<keyword id="KW-0804">Transcription</keyword>
<keyword id="KW-0805">Transcription regulation</keyword>
<keyword id="KW-0902">Two-component regulatory system</keyword>
<sequence>MTIKVLFVDDHEMVRIGISSYLSTQSDIEVVGEGASGKEAIAKAHELKPDLILMDLLMEDMDGVEATTQIKKDLPQIKVLMLTSFIEDKEVYRALDAGVDSYILKTTSAKDIADAVRKTSRGESVFEPEVLVKMRNRMKKRAELYEMLTEREMEILLLIAKGYSNQEIASASHITIKTVKTHVSNILSKLEVQDRTQAVIYAFQHNLIQ</sequence>